<comment type="subcellular location">
    <subcellularLocation>
        <location evidence="1">Membrane</location>
        <topology evidence="1">Multi-pass membrane protein</topology>
    </subcellularLocation>
</comment>
<comment type="similarity">
    <text evidence="3">Belongs to the tetraspanin (TM4SF) family.</text>
</comment>
<feature type="chain" id="PRO_0000290012" description="Tetraspanin-6">
    <location>
        <begin position="1"/>
        <end position="245"/>
    </location>
</feature>
<feature type="topological domain" description="Cytoplasmic" evidence="2">
    <location>
        <begin position="1"/>
        <end position="19"/>
    </location>
</feature>
<feature type="transmembrane region" description="Helical" evidence="2">
    <location>
        <begin position="20"/>
        <end position="40"/>
    </location>
</feature>
<feature type="topological domain" description="Extracellular" evidence="2">
    <location>
        <begin position="41"/>
        <end position="59"/>
    </location>
</feature>
<feature type="transmembrane region" description="Helical" evidence="2">
    <location>
        <begin position="60"/>
        <end position="80"/>
    </location>
</feature>
<feature type="topological domain" description="Cytoplasmic" evidence="2">
    <location>
        <begin position="81"/>
        <end position="93"/>
    </location>
</feature>
<feature type="transmembrane region" description="Helical" evidence="2">
    <location>
        <begin position="94"/>
        <end position="114"/>
    </location>
</feature>
<feature type="topological domain" description="Extracellular" evidence="2">
    <location>
        <begin position="115"/>
        <end position="208"/>
    </location>
</feature>
<feature type="transmembrane region" description="Helical" evidence="2">
    <location>
        <begin position="209"/>
        <end position="229"/>
    </location>
</feature>
<feature type="topological domain" description="Cytoplasmic" evidence="2">
    <location>
        <begin position="230"/>
        <end position="245"/>
    </location>
</feature>
<feature type="glycosylation site" description="N-linked (GlcNAc...) asparagine" evidence="2">
    <location>
        <position position="134"/>
    </location>
</feature>
<gene>
    <name type="primary">TSPAN6</name>
</gene>
<name>TSN6_PONAB</name>
<accession>Q5RAS5</accession>
<dbReference type="EMBL" id="CR858937">
    <property type="protein sequence ID" value="CAH91135.1"/>
    <property type="molecule type" value="mRNA"/>
</dbReference>
<dbReference type="RefSeq" id="NP_001125664.1">
    <property type="nucleotide sequence ID" value="NM_001132192.2"/>
</dbReference>
<dbReference type="RefSeq" id="XP_054399988.1">
    <property type="nucleotide sequence ID" value="XM_054544013.2"/>
</dbReference>
<dbReference type="RefSeq" id="XP_054399989.1">
    <property type="nucleotide sequence ID" value="XM_054544014.2"/>
</dbReference>
<dbReference type="RefSeq" id="XP_054399990.1">
    <property type="nucleotide sequence ID" value="XM_054544015.2"/>
</dbReference>
<dbReference type="RefSeq" id="XP_054399991.1">
    <property type="nucleotide sequence ID" value="XM_054544016.2"/>
</dbReference>
<dbReference type="RefSeq" id="XP_054399992.1">
    <property type="nucleotide sequence ID" value="XM_054544017.2"/>
</dbReference>
<dbReference type="SMR" id="Q5RAS5"/>
<dbReference type="FunCoup" id="Q5RAS5">
    <property type="interactions" value="357"/>
</dbReference>
<dbReference type="STRING" id="9601.ENSPPYP00000022992"/>
<dbReference type="GlyCosmos" id="Q5RAS5">
    <property type="glycosylation" value="1 site, No reported glycans"/>
</dbReference>
<dbReference type="Ensembl" id="ENSPPYT00000023960.3">
    <property type="protein sequence ID" value="ENSPPYP00000022992.2"/>
    <property type="gene ID" value="ENSPPYG00000020538.3"/>
</dbReference>
<dbReference type="GeneID" id="100172584"/>
<dbReference type="KEGG" id="pon:100172584"/>
<dbReference type="CTD" id="7105"/>
<dbReference type="eggNOG" id="KOG3882">
    <property type="taxonomic scope" value="Eukaryota"/>
</dbReference>
<dbReference type="GeneTree" id="ENSGT00940000159092"/>
<dbReference type="HOGENOM" id="CLU_055524_3_0_1"/>
<dbReference type="InParanoid" id="Q5RAS5"/>
<dbReference type="OMA" id="YRNWEDT"/>
<dbReference type="OrthoDB" id="195679at2759"/>
<dbReference type="TreeFam" id="TF352891"/>
<dbReference type="Proteomes" id="UP000001595">
    <property type="component" value="Chromosome X"/>
</dbReference>
<dbReference type="GO" id="GO:0005886">
    <property type="term" value="C:plasma membrane"/>
    <property type="evidence" value="ECO:0007669"/>
    <property type="project" value="TreeGrafter"/>
</dbReference>
<dbReference type="CDD" id="cd03161">
    <property type="entry name" value="TM4SF2_6_like_LEL"/>
    <property type="match status" value="1"/>
</dbReference>
<dbReference type="FunFam" id="1.10.1450.10:FF:000013">
    <property type="entry name" value="Tetraspanin"/>
    <property type="match status" value="1"/>
</dbReference>
<dbReference type="Gene3D" id="1.10.1450.10">
    <property type="entry name" value="Tetraspanin"/>
    <property type="match status" value="1"/>
</dbReference>
<dbReference type="InterPro" id="IPR018499">
    <property type="entry name" value="Tetraspanin/Peripherin"/>
</dbReference>
<dbReference type="InterPro" id="IPR000301">
    <property type="entry name" value="Tetraspanin_animals"/>
</dbReference>
<dbReference type="InterPro" id="IPR018503">
    <property type="entry name" value="Tetraspanin_CS"/>
</dbReference>
<dbReference type="InterPro" id="IPR008952">
    <property type="entry name" value="Tetraspanin_EC2_sf"/>
</dbReference>
<dbReference type="InterPro" id="IPR048232">
    <property type="entry name" value="TSN6/7_LEL"/>
</dbReference>
<dbReference type="PANTHER" id="PTHR19282">
    <property type="entry name" value="TETRASPANIN"/>
    <property type="match status" value="1"/>
</dbReference>
<dbReference type="PANTHER" id="PTHR19282:SF169">
    <property type="entry name" value="TETRASPANIN-6"/>
    <property type="match status" value="1"/>
</dbReference>
<dbReference type="Pfam" id="PF00335">
    <property type="entry name" value="Tetraspanin"/>
    <property type="match status" value="1"/>
</dbReference>
<dbReference type="PIRSF" id="PIRSF002419">
    <property type="entry name" value="Tetraspanin"/>
    <property type="match status" value="1"/>
</dbReference>
<dbReference type="PRINTS" id="PR00259">
    <property type="entry name" value="TMFOUR"/>
</dbReference>
<dbReference type="SUPFAM" id="SSF48652">
    <property type="entry name" value="Tetraspanin"/>
    <property type="match status" value="1"/>
</dbReference>
<dbReference type="PROSITE" id="PS00421">
    <property type="entry name" value="TM4_1"/>
    <property type="match status" value="1"/>
</dbReference>
<proteinExistence type="evidence at transcript level"/>
<sequence length="245" mass="27577">MASPSRRLQTKPVITCFKSVLLIYTFIFWITGVILLAVGIWGKVSLENYFSLLNEKATNVPFVLIATGTVIILLGTFGCFATCRASAWMLKLYAMFLTLIFLVELVAAIVGFVFRHEIKNSFKNNYEKALKQYNSTGDYRSHAVDKIQNTLHCCGVTDYRDWTDTNYYSEKGFPKSCCKLEDCTPQRDADKVNNEGCFIKVMTIIESEMGVVAGISFGVACFQLIGIFLAYCLSRAITNNQYEIV</sequence>
<evidence type="ECO:0000250" key="1"/>
<evidence type="ECO:0000255" key="2"/>
<evidence type="ECO:0000305" key="3"/>
<reference key="1">
    <citation type="submission" date="2004-11" db="EMBL/GenBank/DDBJ databases">
        <authorList>
            <consortium name="The German cDNA consortium"/>
        </authorList>
    </citation>
    <scope>NUCLEOTIDE SEQUENCE [LARGE SCALE MRNA]</scope>
    <source>
        <tissue>Kidney</tissue>
    </source>
</reference>
<protein>
    <recommendedName>
        <fullName>Tetraspanin-6</fullName>
        <shortName>Tspan-6</shortName>
    </recommendedName>
</protein>
<organism>
    <name type="scientific">Pongo abelii</name>
    <name type="common">Sumatran orangutan</name>
    <name type="synonym">Pongo pygmaeus abelii</name>
    <dbReference type="NCBI Taxonomy" id="9601"/>
    <lineage>
        <taxon>Eukaryota</taxon>
        <taxon>Metazoa</taxon>
        <taxon>Chordata</taxon>
        <taxon>Craniata</taxon>
        <taxon>Vertebrata</taxon>
        <taxon>Euteleostomi</taxon>
        <taxon>Mammalia</taxon>
        <taxon>Eutheria</taxon>
        <taxon>Euarchontoglires</taxon>
        <taxon>Primates</taxon>
        <taxon>Haplorrhini</taxon>
        <taxon>Catarrhini</taxon>
        <taxon>Hominidae</taxon>
        <taxon>Pongo</taxon>
    </lineage>
</organism>
<keyword id="KW-0325">Glycoprotein</keyword>
<keyword id="KW-0472">Membrane</keyword>
<keyword id="KW-1185">Reference proteome</keyword>
<keyword id="KW-0812">Transmembrane</keyword>
<keyword id="KW-1133">Transmembrane helix</keyword>